<protein>
    <recommendedName>
        <fullName>Cytochrome P450 82A4</fullName>
        <ecNumber>1.14.-.-</ecNumber>
    </recommendedName>
    <alternativeName>
        <fullName>Cytochrome P450 CP9</fullName>
    </alternativeName>
</protein>
<keyword id="KW-0349">Heme</keyword>
<keyword id="KW-0408">Iron</keyword>
<keyword id="KW-0472">Membrane</keyword>
<keyword id="KW-0479">Metal-binding</keyword>
<keyword id="KW-0503">Monooxygenase</keyword>
<keyword id="KW-0560">Oxidoreductase</keyword>
<keyword id="KW-1185">Reference proteome</keyword>
<organism>
    <name type="scientific">Glycine max</name>
    <name type="common">Soybean</name>
    <name type="synonym">Glycine hispida</name>
    <dbReference type="NCBI Taxonomy" id="3847"/>
    <lineage>
        <taxon>Eukaryota</taxon>
        <taxon>Viridiplantae</taxon>
        <taxon>Streptophyta</taxon>
        <taxon>Embryophyta</taxon>
        <taxon>Tracheophyta</taxon>
        <taxon>Spermatophyta</taxon>
        <taxon>Magnoliopsida</taxon>
        <taxon>eudicotyledons</taxon>
        <taxon>Gunneridae</taxon>
        <taxon>Pentapetalae</taxon>
        <taxon>rosids</taxon>
        <taxon>fabids</taxon>
        <taxon>Fabales</taxon>
        <taxon>Fabaceae</taxon>
        <taxon>Papilionoideae</taxon>
        <taxon>50 kb inversion clade</taxon>
        <taxon>NPAAA clade</taxon>
        <taxon>indigoferoid/millettioid clade</taxon>
        <taxon>Phaseoleae</taxon>
        <taxon>Glycine</taxon>
        <taxon>Glycine subgen. Soja</taxon>
    </lineage>
</organism>
<proteinExistence type="evidence at transcript level"/>
<comment type="cofactor">
    <cofactor evidence="1">
        <name>heme</name>
        <dbReference type="ChEBI" id="CHEBI:30413"/>
    </cofactor>
</comment>
<comment type="subcellular location">
    <subcellularLocation>
        <location evidence="2">Membrane</location>
    </subcellularLocation>
</comment>
<comment type="induction">
    <text>By fungal elicitor.</text>
</comment>
<comment type="similarity">
    <text evidence="2">Belongs to the cytochrome P450 family.</text>
</comment>
<accession>O49859</accession>
<name>C82A4_SOYBN</name>
<dbReference type="EC" id="1.14.-.-"/>
<dbReference type="EMBL" id="Y10983">
    <property type="protein sequence ID" value="CAA71877.1"/>
    <property type="molecule type" value="mRNA"/>
</dbReference>
<dbReference type="PIR" id="T07749">
    <property type="entry name" value="T07749"/>
</dbReference>
<dbReference type="RefSeq" id="NP_001304430.1">
    <property type="nucleotide sequence ID" value="NM_001317501.1"/>
</dbReference>
<dbReference type="SMR" id="O49859"/>
<dbReference type="STRING" id="3847.O49859"/>
<dbReference type="PaxDb" id="3847-GLYMA01G33150.1"/>
<dbReference type="GeneID" id="100778056"/>
<dbReference type="KEGG" id="gmx:100778056"/>
<dbReference type="eggNOG" id="KOG0156">
    <property type="taxonomic scope" value="Eukaryota"/>
</dbReference>
<dbReference type="InParanoid" id="O49859"/>
<dbReference type="OrthoDB" id="2789670at2759"/>
<dbReference type="Proteomes" id="UP000008827">
    <property type="component" value="Unplaced"/>
</dbReference>
<dbReference type="GO" id="GO:0016020">
    <property type="term" value="C:membrane"/>
    <property type="evidence" value="ECO:0007669"/>
    <property type="project" value="UniProtKB-SubCell"/>
</dbReference>
<dbReference type="GO" id="GO:0020037">
    <property type="term" value="F:heme binding"/>
    <property type="evidence" value="ECO:0007669"/>
    <property type="project" value="InterPro"/>
</dbReference>
<dbReference type="GO" id="GO:0005506">
    <property type="term" value="F:iron ion binding"/>
    <property type="evidence" value="ECO:0007669"/>
    <property type="project" value="InterPro"/>
</dbReference>
<dbReference type="GO" id="GO:0004497">
    <property type="term" value="F:monooxygenase activity"/>
    <property type="evidence" value="ECO:0000318"/>
    <property type="project" value="GO_Central"/>
</dbReference>
<dbReference type="GO" id="GO:0016705">
    <property type="term" value="F:oxidoreductase activity, acting on paired donors, with incorporation or reduction of molecular oxygen"/>
    <property type="evidence" value="ECO:0007669"/>
    <property type="project" value="InterPro"/>
</dbReference>
<dbReference type="CDD" id="cd20654">
    <property type="entry name" value="CYP82"/>
    <property type="match status" value="1"/>
</dbReference>
<dbReference type="FunFam" id="1.10.630.10:FF:000026">
    <property type="entry name" value="Cytochrome P450 82C4"/>
    <property type="match status" value="1"/>
</dbReference>
<dbReference type="Gene3D" id="1.10.630.10">
    <property type="entry name" value="Cytochrome P450"/>
    <property type="match status" value="1"/>
</dbReference>
<dbReference type="InterPro" id="IPR001128">
    <property type="entry name" value="Cyt_P450"/>
</dbReference>
<dbReference type="InterPro" id="IPR017972">
    <property type="entry name" value="Cyt_P450_CS"/>
</dbReference>
<dbReference type="InterPro" id="IPR002401">
    <property type="entry name" value="Cyt_P450_E_grp-I"/>
</dbReference>
<dbReference type="InterPro" id="IPR036396">
    <property type="entry name" value="Cyt_P450_sf"/>
</dbReference>
<dbReference type="InterPro" id="IPR050651">
    <property type="entry name" value="Plant_Cytochrome_P450_Monoox"/>
</dbReference>
<dbReference type="PANTHER" id="PTHR47947:SF18">
    <property type="entry name" value="CYTOCHROME P450 82A2"/>
    <property type="match status" value="1"/>
</dbReference>
<dbReference type="PANTHER" id="PTHR47947">
    <property type="entry name" value="CYTOCHROME P450 82C3-RELATED"/>
    <property type="match status" value="1"/>
</dbReference>
<dbReference type="Pfam" id="PF00067">
    <property type="entry name" value="p450"/>
    <property type="match status" value="1"/>
</dbReference>
<dbReference type="PRINTS" id="PR00463">
    <property type="entry name" value="EP450I"/>
</dbReference>
<dbReference type="PRINTS" id="PR00385">
    <property type="entry name" value="P450"/>
</dbReference>
<dbReference type="SUPFAM" id="SSF48264">
    <property type="entry name" value="Cytochrome P450"/>
    <property type="match status" value="1"/>
</dbReference>
<dbReference type="PROSITE" id="PS00086">
    <property type="entry name" value="CYTOCHROME_P450"/>
    <property type="match status" value="1"/>
</dbReference>
<reference key="1">
    <citation type="journal article" date="1998" name="Mol. Gen. Genet.">
        <title>Identification of elicitor-induced cytochrome P450s of soybean (Glycine max L.) using differential display of mRNA.</title>
        <authorList>
            <person name="Schopfer C.R."/>
            <person name="Ebel J."/>
        </authorList>
    </citation>
    <scope>NUCLEOTIDE SEQUENCE [MRNA]</scope>
    <source>
        <strain>cv. Harosoy 63</strain>
    </source>
</reference>
<gene>
    <name type="primary">CYP82A4</name>
</gene>
<evidence type="ECO:0000250" key="1"/>
<evidence type="ECO:0000305" key="2"/>
<feature type="chain" id="PRO_0000052165" description="Cytochrome P450 82A4">
    <location>
        <begin position="1"/>
        <end position="525"/>
    </location>
</feature>
<feature type="binding site" description="axial binding residue" evidence="1">
    <location>
        <position position="462"/>
    </location>
    <ligand>
        <name>heme</name>
        <dbReference type="ChEBI" id="CHEBI:30413"/>
    </ligand>
    <ligandPart>
        <name>Fe</name>
        <dbReference type="ChEBI" id="CHEBI:18248"/>
    </ligandPart>
</feature>
<sequence length="525" mass="58527">MELVLHFLNTTTIGVVSLIFLLCLFLYGPLKKVHGSSKEAPTVGGAWPIFGHLPLLIGSKSPHKALGALAEKHGPLFTIKLGAKKALVVSDWEMARECFTTNDVAVSARPKLLVAELMCYNNAMLLVAPYGPYWRELRKIIVTEILSSSRVEQLQDVRVSEVQNSIVELYDVWRSQKNESDYASVELKQWFAQPIFNMVLRMVVGKRFLSATATDEKAEKCVKAVDEFMRLAGVFTVGDAIPYLRWLDFGGYEKAMKETAKELDVMISEWLEEHRQKRALGEGVDGAQDFMNVMLSSLDGKTIDGIDADTLIKSTVLTIIQAGTEASISTIIWAMCLILKNPLILENKAELDIQVGKDRCICESDISNLVYLQAVVKETLRLYAPGPLSSPREFAEDCTLGGYHVKKGTRLITNIWKIHTDPNVWSDPFEFKPDRFLTTHKDIDVKGHHFQLLPFGSGRRVCPGISFGLQTVHLALASFLHSFEILNPSTEPLDMTEAFGVTNTKATPLEVLVKPCLSPSCYKSM</sequence>